<name>PYRD_ACIBT</name>
<accession>A3M6Y2</accession>
<gene>
    <name evidence="1" type="primary">pyrD</name>
    <name type="ordered locus">A1S_2253</name>
</gene>
<protein>
    <recommendedName>
        <fullName evidence="1">Dihydroorotate dehydrogenase (quinone)</fullName>
        <ecNumber evidence="1">1.3.5.2</ecNumber>
    </recommendedName>
    <alternativeName>
        <fullName evidence="1">DHOdehase</fullName>
        <shortName evidence="1">DHOD</shortName>
        <shortName evidence="1">DHODase</shortName>
    </alternativeName>
    <alternativeName>
        <fullName evidence="1">Dihydroorotate oxidase</fullName>
    </alternativeName>
</protein>
<evidence type="ECO:0000255" key="1">
    <source>
        <dbReference type="HAMAP-Rule" id="MF_00225"/>
    </source>
</evidence>
<organism>
    <name type="scientific">Acinetobacter baumannii (strain ATCC 17978 / DSM 105126 / CIP 53.77 / LMG 1025 / NCDC KC755 / 5377)</name>
    <dbReference type="NCBI Taxonomy" id="400667"/>
    <lineage>
        <taxon>Bacteria</taxon>
        <taxon>Pseudomonadati</taxon>
        <taxon>Pseudomonadota</taxon>
        <taxon>Gammaproteobacteria</taxon>
        <taxon>Moraxellales</taxon>
        <taxon>Moraxellaceae</taxon>
        <taxon>Acinetobacter</taxon>
        <taxon>Acinetobacter calcoaceticus/baumannii complex</taxon>
    </lineage>
</organism>
<feature type="chain" id="PRO_1000100242" description="Dihydroorotate dehydrogenase (quinone)">
    <location>
        <begin position="1"/>
        <end position="334"/>
    </location>
</feature>
<feature type="active site" description="Nucleophile" evidence="1">
    <location>
        <position position="172"/>
    </location>
</feature>
<feature type="binding site" evidence="1">
    <location>
        <begin position="59"/>
        <end position="63"/>
    </location>
    <ligand>
        <name>FMN</name>
        <dbReference type="ChEBI" id="CHEBI:58210"/>
    </ligand>
</feature>
<feature type="binding site" evidence="1">
    <location>
        <position position="63"/>
    </location>
    <ligand>
        <name>substrate</name>
    </ligand>
</feature>
<feature type="binding site" evidence="1">
    <location>
        <position position="83"/>
    </location>
    <ligand>
        <name>FMN</name>
        <dbReference type="ChEBI" id="CHEBI:58210"/>
    </ligand>
</feature>
<feature type="binding site" evidence="1">
    <location>
        <begin position="108"/>
        <end position="112"/>
    </location>
    <ligand>
        <name>substrate</name>
    </ligand>
</feature>
<feature type="binding site" evidence="1">
    <location>
        <position position="136"/>
    </location>
    <ligand>
        <name>FMN</name>
        <dbReference type="ChEBI" id="CHEBI:58210"/>
    </ligand>
</feature>
<feature type="binding site" evidence="1">
    <location>
        <position position="169"/>
    </location>
    <ligand>
        <name>FMN</name>
        <dbReference type="ChEBI" id="CHEBI:58210"/>
    </ligand>
</feature>
<feature type="binding site" evidence="1">
    <location>
        <position position="169"/>
    </location>
    <ligand>
        <name>substrate</name>
    </ligand>
</feature>
<feature type="binding site" evidence="1">
    <location>
        <position position="174"/>
    </location>
    <ligand>
        <name>substrate</name>
    </ligand>
</feature>
<feature type="binding site" evidence="1">
    <location>
        <position position="214"/>
    </location>
    <ligand>
        <name>FMN</name>
        <dbReference type="ChEBI" id="CHEBI:58210"/>
    </ligand>
</feature>
<feature type="binding site" evidence="1">
    <location>
        <position position="242"/>
    </location>
    <ligand>
        <name>FMN</name>
        <dbReference type="ChEBI" id="CHEBI:58210"/>
    </ligand>
</feature>
<feature type="binding site" evidence="1">
    <location>
        <begin position="243"/>
        <end position="244"/>
    </location>
    <ligand>
        <name>substrate</name>
    </ligand>
</feature>
<feature type="binding site" evidence="1">
    <location>
        <position position="265"/>
    </location>
    <ligand>
        <name>FMN</name>
        <dbReference type="ChEBI" id="CHEBI:58210"/>
    </ligand>
</feature>
<feature type="binding site" evidence="1">
    <location>
        <position position="294"/>
    </location>
    <ligand>
        <name>FMN</name>
        <dbReference type="ChEBI" id="CHEBI:58210"/>
    </ligand>
</feature>
<feature type="binding site" evidence="1">
    <location>
        <begin position="315"/>
        <end position="316"/>
    </location>
    <ligand>
        <name>FMN</name>
        <dbReference type="ChEBI" id="CHEBI:58210"/>
    </ligand>
</feature>
<proteinExistence type="inferred from homology"/>
<keyword id="KW-1003">Cell membrane</keyword>
<keyword id="KW-0285">Flavoprotein</keyword>
<keyword id="KW-0288">FMN</keyword>
<keyword id="KW-0472">Membrane</keyword>
<keyword id="KW-0560">Oxidoreductase</keyword>
<keyword id="KW-0665">Pyrimidine biosynthesis</keyword>
<reference key="1">
    <citation type="journal article" date="2007" name="Genes Dev.">
        <title>New insights into Acinetobacter baumannii pathogenesis revealed by high-density pyrosequencing and transposon mutagenesis.</title>
        <authorList>
            <person name="Smith M.G."/>
            <person name="Gianoulis T.A."/>
            <person name="Pukatzki S."/>
            <person name="Mekalanos J.J."/>
            <person name="Ornston L.N."/>
            <person name="Gerstein M."/>
            <person name="Snyder M."/>
        </authorList>
    </citation>
    <scope>NUCLEOTIDE SEQUENCE [LARGE SCALE GENOMIC DNA]</scope>
    <source>
        <strain>ATCC 17978 / DSM 105126 / CIP 53.77 / LMG 1025 / NCDC KC755 / 5377</strain>
    </source>
</reference>
<dbReference type="EC" id="1.3.5.2" evidence="1"/>
<dbReference type="EMBL" id="CP000521">
    <property type="protein sequence ID" value="ABO12676.2"/>
    <property type="molecule type" value="Genomic_DNA"/>
</dbReference>
<dbReference type="RefSeq" id="WP_000966986.1">
    <property type="nucleotide sequence ID" value="NZ_CP053098.1"/>
</dbReference>
<dbReference type="SMR" id="A3M6Y2"/>
<dbReference type="KEGG" id="acb:A1S_2253"/>
<dbReference type="HOGENOM" id="CLU_013640_2_0_6"/>
<dbReference type="UniPathway" id="UPA00070">
    <property type="reaction ID" value="UER00946"/>
</dbReference>
<dbReference type="GO" id="GO:0005737">
    <property type="term" value="C:cytoplasm"/>
    <property type="evidence" value="ECO:0007669"/>
    <property type="project" value="InterPro"/>
</dbReference>
<dbReference type="GO" id="GO:0005886">
    <property type="term" value="C:plasma membrane"/>
    <property type="evidence" value="ECO:0007669"/>
    <property type="project" value="UniProtKB-SubCell"/>
</dbReference>
<dbReference type="GO" id="GO:0106430">
    <property type="term" value="F:dihydroorotate dehydrogenase (quinone) activity"/>
    <property type="evidence" value="ECO:0007669"/>
    <property type="project" value="UniProtKB-EC"/>
</dbReference>
<dbReference type="GO" id="GO:0006207">
    <property type="term" value="P:'de novo' pyrimidine nucleobase biosynthetic process"/>
    <property type="evidence" value="ECO:0007669"/>
    <property type="project" value="InterPro"/>
</dbReference>
<dbReference type="GO" id="GO:0044205">
    <property type="term" value="P:'de novo' UMP biosynthetic process"/>
    <property type="evidence" value="ECO:0007669"/>
    <property type="project" value="UniProtKB-UniRule"/>
</dbReference>
<dbReference type="CDD" id="cd04738">
    <property type="entry name" value="DHOD_2_like"/>
    <property type="match status" value="1"/>
</dbReference>
<dbReference type="FunFam" id="3.20.20.70:FF:000028">
    <property type="entry name" value="Dihydroorotate dehydrogenase (quinone)"/>
    <property type="match status" value="1"/>
</dbReference>
<dbReference type="Gene3D" id="3.20.20.70">
    <property type="entry name" value="Aldolase class I"/>
    <property type="match status" value="1"/>
</dbReference>
<dbReference type="HAMAP" id="MF_00225">
    <property type="entry name" value="DHO_dh_type2"/>
    <property type="match status" value="1"/>
</dbReference>
<dbReference type="InterPro" id="IPR013785">
    <property type="entry name" value="Aldolase_TIM"/>
</dbReference>
<dbReference type="InterPro" id="IPR050074">
    <property type="entry name" value="DHO_dehydrogenase"/>
</dbReference>
<dbReference type="InterPro" id="IPR012135">
    <property type="entry name" value="Dihydroorotate_DH_1_2"/>
</dbReference>
<dbReference type="InterPro" id="IPR005719">
    <property type="entry name" value="Dihydroorotate_DH_2"/>
</dbReference>
<dbReference type="InterPro" id="IPR005720">
    <property type="entry name" value="Dihydroorotate_DH_cat"/>
</dbReference>
<dbReference type="InterPro" id="IPR001295">
    <property type="entry name" value="Dihydroorotate_DH_CS"/>
</dbReference>
<dbReference type="NCBIfam" id="NF003644">
    <property type="entry name" value="PRK05286.1-1"/>
    <property type="match status" value="1"/>
</dbReference>
<dbReference type="NCBIfam" id="NF003645">
    <property type="entry name" value="PRK05286.1-2"/>
    <property type="match status" value="1"/>
</dbReference>
<dbReference type="NCBIfam" id="NF003646">
    <property type="entry name" value="PRK05286.1-4"/>
    <property type="match status" value="1"/>
</dbReference>
<dbReference type="NCBIfam" id="NF003652">
    <property type="entry name" value="PRK05286.2-5"/>
    <property type="match status" value="1"/>
</dbReference>
<dbReference type="NCBIfam" id="TIGR01036">
    <property type="entry name" value="pyrD_sub2"/>
    <property type="match status" value="1"/>
</dbReference>
<dbReference type="PANTHER" id="PTHR48109:SF4">
    <property type="entry name" value="DIHYDROOROTATE DEHYDROGENASE (QUINONE), MITOCHONDRIAL"/>
    <property type="match status" value="1"/>
</dbReference>
<dbReference type="PANTHER" id="PTHR48109">
    <property type="entry name" value="DIHYDROOROTATE DEHYDROGENASE (QUINONE), MITOCHONDRIAL-RELATED"/>
    <property type="match status" value="1"/>
</dbReference>
<dbReference type="Pfam" id="PF01180">
    <property type="entry name" value="DHO_dh"/>
    <property type="match status" value="1"/>
</dbReference>
<dbReference type="PIRSF" id="PIRSF000164">
    <property type="entry name" value="DHO_oxidase"/>
    <property type="match status" value="1"/>
</dbReference>
<dbReference type="SUPFAM" id="SSF51395">
    <property type="entry name" value="FMN-linked oxidoreductases"/>
    <property type="match status" value="1"/>
</dbReference>
<dbReference type="PROSITE" id="PS00911">
    <property type="entry name" value="DHODEHASE_1"/>
    <property type="match status" value="1"/>
</dbReference>
<dbReference type="PROSITE" id="PS00912">
    <property type="entry name" value="DHODEHASE_2"/>
    <property type="match status" value="1"/>
</dbReference>
<sequence>MLYSLARPMLFSLAPERAHELTLSMLDKAHKLGMMRQTVEAKPTTCMGIEFPNPVGLAAGLDKNGAHIDALAGLGFGFIEIGTITPRPQSGNPKPRLFRIPEAKAIINRMGFNNDGVDKLIENVKASKFRGILGINIGKNADTPVEKAVDDYLICLEKVYNYASYITVNISSPNTKNLRSLQSGDALTELLQTLKARQLELAEQYNHYVPLVLKVAPDLTAEDVEFISAQLLDFKIDGLIVTNTTLSREGVENLPYGNESGGLSGAPVFEKSTECLRLFAQTLKGQIPLIGVGGILSGEQAAAKQQAGATLVQIYSGLIYTGPTLVKQCVEAMT</sequence>
<comment type="function">
    <text evidence="1">Catalyzes the conversion of dihydroorotate to orotate with quinone as electron acceptor.</text>
</comment>
<comment type="catalytic activity">
    <reaction evidence="1">
        <text>(S)-dihydroorotate + a quinone = orotate + a quinol</text>
        <dbReference type="Rhea" id="RHEA:30187"/>
        <dbReference type="ChEBI" id="CHEBI:24646"/>
        <dbReference type="ChEBI" id="CHEBI:30839"/>
        <dbReference type="ChEBI" id="CHEBI:30864"/>
        <dbReference type="ChEBI" id="CHEBI:132124"/>
        <dbReference type="EC" id="1.3.5.2"/>
    </reaction>
</comment>
<comment type="cofactor">
    <cofactor evidence="1">
        <name>FMN</name>
        <dbReference type="ChEBI" id="CHEBI:58210"/>
    </cofactor>
    <text evidence="1">Binds 1 FMN per subunit.</text>
</comment>
<comment type="pathway">
    <text evidence="1">Pyrimidine metabolism; UMP biosynthesis via de novo pathway; orotate from (S)-dihydroorotate (quinone route): step 1/1.</text>
</comment>
<comment type="subunit">
    <text evidence="1">Monomer.</text>
</comment>
<comment type="subcellular location">
    <subcellularLocation>
        <location evidence="1">Cell membrane</location>
        <topology evidence="1">Peripheral membrane protein</topology>
    </subcellularLocation>
</comment>
<comment type="similarity">
    <text evidence="1">Belongs to the dihydroorotate dehydrogenase family. Type 2 subfamily.</text>
</comment>